<sequence>MRHRQSNRKLNRTTSHRLAMFRNMTNSLLKHEVIKTTLPKAKDLRRFVEPLITLGKESTVANQRLAFDRLRDREMVVKLFGELGPRYQARPGGYLRILKYGFRKGDNAPMALVELVDRPESDAAPVDAE</sequence>
<evidence type="ECO:0000255" key="1">
    <source>
        <dbReference type="HAMAP-Rule" id="MF_01368"/>
    </source>
</evidence>
<evidence type="ECO:0000305" key="2"/>
<accession>Q3SLM3</accession>
<protein>
    <recommendedName>
        <fullName evidence="1">Large ribosomal subunit protein bL17</fullName>
    </recommendedName>
    <alternativeName>
        <fullName evidence="2">50S ribosomal protein L17</fullName>
    </alternativeName>
</protein>
<feature type="chain" id="PRO_0000267960" description="Large ribosomal subunit protein bL17">
    <location>
        <begin position="1"/>
        <end position="129"/>
    </location>
</feature>
<keyword id="KW-1185">Reference proteome</keyword>
<keyword id="KW-0687">Ribonucleoprotein</keyword>
<keyword id="KW-0689">Ribosomal protein</keyword>
<gene>
    <name evidence="1" type="primary">rplQ</name>
    <name type="ordered locus">Tbd_0431</name>
</gene>
<reference key="1">
    <citation type="journal article" date="2006" name="J. Bacteriol.">
        <title>The genome sequence of the obligately chemolithoautotrophic, facultatively anaerobic bacterium Thiobacillus denitrificans.</title>
        <authorList>
            <person name="Beller H.R."/>
            <person name="Chain P.S."/>
            <person name="Letain T.E."/>
            <person name="Chakicherla A."/>
            <person name="Larimer F.W."/>
            <person name="Richardson P.M."/>
            <person name="Coleman M.A."/>
            <person name="Wood A.P."/>
            <person name="Kelly D.P."/>
        </authorList>
    </citation>
    <scope>NUCLEOTIDE SEQUENCE [LARGE SCALE GENOMIC DNA]</scope>
    <source>
        <strain>ATCC 25259 / T1</strain>
    </source>
</reference>
<name>RL17_THIDA</name>
<comment type="subunit">
    <text evidence="1">Part of the 50S ribosomal subunit. Contacts protein L32.</text>
</comment>
<comment type="similarity">
    <text evidence="1">Belongs to the bacterial ribosomal protein bL17 family.</text>
</comment>
<dbReference type="EMBL" id="CP000116">
    <property type="protein sequence ID" value="AAZ96384.1"/>
    <property type="molecule type" value="Genomic_DNA"/>
</dbReference>
<dbReference type="RefSeq" id="WP_011310943.1">
    <property type="nucleotide sequence ID" value="NC_007404.1"/>
</dbReference>
<dbReference type="SMR" id="Q3SLM3"/>
<dbReference type="STRING" id="292415.Tbd_0431"/>
<dbReference type="KEGG" id="tbd:Tbd_0431"/>
<dbReference type="eggNOG" id="COG0203">
    <property type="taxonomic scope" value="Bacteria"/>
</dbReference>
<dbReference type="HOGENOM" id="CLU_074407_2_0_4"/>
<dbReference type="OrthoDB" id="9809073at2"/>
<dbReference type="Proteomes" id="UP000008291">
    <property type="component" value="Chromosome"/>
</dbReference>
<dbReference type="GO" id="GO:0022625">
    <property type="term" value="C:cytosolic large ribosomal subunit"/>
    <property type="evidence" value="ECO:0007669"/>
    <property type="project" value="TreeGrafter"/>
</dbReference>
<dbReference type="GO" id="GO:0003735">
    <property type="term" value="F:structural constituent of ribosome"/>
    <property type="evidence" value="ECO:0007669"/>
    <property type="project" value="InterPro"/>
</dbReference>
<dbReference type="GO" id="GO:0006412">
    <property type="term" value="P:translation"/>
    <property type="evidence" value="ECO:0007669"/>
    <property type="project" value="UniProtKB-UniRule"/>
</dbReference>
<dbReference type="FunFam" id="3.90.1030.10:FF:000001">
    <property type="entry name" value="50S ribosomal protein L17"/>
    <property type="match status" value="1"/>
</dbReference>
<dbReference type="Gene3D" id="3.90.1030.10">
    <property type="entry name" value="Ribosomal protein L17"/>
    <property type="match status" value="1"/>
</dbReference>
<dbReference type="HAMAP" id="MF_01368">
    <property type="entry name" value="Ribosomal_bL17"/>
    <property type="match status" value="1"/>
</dbReference>
<dbReference type="InterPro" id="IPR000456">
    <property type="entry name" value="Ribosomal_bL17"/>
</dbReference>
<dbReference type="InterPro" id="IPR047859">
    <property type="entry name" value="Ribosomal_bL17_CS"/>
</dbReference>
<dbReference type="InterPro" id="IPR036373">
    <property type="entry name" value="Ribosomal_bL17_sf"/>
</dbReference>
<dbReference type="NCBIfam" id="TIGR00059">
    <property type="entry name" value="L17"/>
    <property type="match status" value="1"/>
</dbReference>
<dbReference type="PANTHER" id="PTHR14413:SF16">
    <property type="entry name" value="LARGE RIBOSOMAL SUBUNIT PROTEIN BL17M"/>
    <property type="match status" value="1"/>
</dbReference>
<dbReference type="PANTHER" id="PTHR14413">
    <property type="entry name" value="RIBOSOMAL PROTEIN L17"/>
    <property type="match status" value="1"/>
</dbReference>
<dbReference type="Pfam" id="PF01196">
    <property type="entry name" value="Ribosomal_L17"/>
    <property type="match status" value="1"/>
</dbReference>
<dbReference type="SUPFAM" id="SSF64263">
    <property type="entry name" value="Prokaryotic ribosomal protein L17"/>
    <property type="match status" value="1"/>
</dbReference>
<dbReference type="PROSITE" id="PS01167">
    <property type="entry name" value="RIBOSOMAL_L17"/>
    <property type="match status" value="1"/>
</dbReference>
<organism>
    <name type="scientific">Thiobacillus denitrificans (strain ATCC 25259 / T1)</name>
    <dbReference type="NCBI Taxonomy" id="292415"/>
    <lineage>
        <taxon>Bacteria</taxon>
        <taxon>Pseudomonadati</taxon>
        <taxon>Pseudomonadota</taxon>
        <taxon>Betaproteobacteria</taxon>
        <taxon>Nitrosomonadales</taxon>
        <taxon>Thiobacillaceae</taxon>
        <taxon>Thiobacillus</taxon>
    </lineage>
</organism>
<proteinExistence type="inferred from homology"/>